<comment type="function">
    <text evidence="1">Catalyzes the conversion of dihydroorotate to orotate with fumarate as the electron acceptor.</text>
</comment>
<comment type="catalytic activity">
    <reaction>
        <text>(S)-dihydroorotate + fumarate = orotate + succinate</text>
        <dbReference type="Rhea" id="RHEA:30059"/>
        <dbReference type="ChEBI" id="CHEBI:29806"/>
        <dbReference type="ChEBI" id="CHEBI:30031"/>
        <dbReference type="ChEBI" id="CHEBI:30839"/>
        <dbReference type="ChEBI" id="CHEBI:30864"/>
        <dbReference type="EC" id="1.3.98.1"/>
    </reaction>
</comment>
<comment type="cofactor">
    <cofactor evidence="1">
        <name>FMN</name>
        <dbReference type="ChEBI" id="CHEBI:58210"/>
    </cofactor>
    <text evidence="1">Binds 1 FMN per subunit.</text>
</comment>
<comment type="pathway">
    <text>Pyrimidine metabolism; UMP biosynthesis via de novo pathway.</text>
</comment>
<comment type="subunit">
    <text evidence="1">Homodimer.</text>
</comment>
<comment type="subcellular location">
    <subcellularLocation>
        <location evidence="1">Cytoplasm</location>
    </subcellularLocation>
</comment>
<comment type="similarity">
    <text evidence="2">Belongs to the dihydroorotate dehydrogenase family. Type 1 subfamily.</text>
</comment>
<accession>A2RDV3</accession>
<sequence>MVSTATQIGHFSFDNCLMNAAGVYCMTKEELIEVEKSQAASFVTKTGTLEVRPGNPEPRYADTRLGSINSMGLPNNGFRYYLDFVSDLAKTGQHKPHFLSVVGLSPTETETILKAIMASDYEGLVELNLSCPNVPGKPQIAYDFETTNQLLENLFTYYTKPLGIKLPPYFDIVHFDQAAAIFNKYPLSFVNCVNSIGNGLVIEDEQVLIKPKNGFGGIGGDYIKPTALANVHAFYKRLKPSIHIIGTGGVKTGRDAFEHILCGASMVQIGTALHQEGPAIFERVTKELKTIMVEKGYQSLNDFRGNLRYKD</sequence>
<name>PYRDA_STRPG</name>
<keyword id="KW-0963">Cytoplasm</keyword>
<keyword id="KW-0285">Flavoprotein</keyword>
<keyword id="KW-0288">FMN</keyword>
<keyword id="KW-0560">Oxidoreductase</keyword>
<keyword id="KW-0665">Pyrimidine biosynthesis</keyword>
<protein>
    <recommendedName>
        <fullName>Putative dihydroorotate dehydrogenase A (fumarate)</fullName>
        <shortName>DHOD A</shortName>
        <shortName>DHODase A</shortName>
        <shortName>DHOdehase A</shortName>
        <ecNumber>1.3.98.1</ecNumber>
    </recommendedName>
</protein>
<reference key="1">
    <citation type="journal article" date="2007" name="J. Bacteriol.">
        <title>Complete genome of acute rheumatic fever-associated serotype M5 Streptococcus pyogenes strain Manfredo.</title>
        <authorList>
            <person name="Holden M.T.G."/>
            <person name="Scott A."/>
            <person name="Cherevach I."/>
            <person name="Chillingworth T."/>
            <person name="Churcher C."/>
            <person name="Cronin A."/>
            <person name="Dowd L."/>
            <person name="Feltwell T."/>
            <person name="Hamlin N."/>
            <person name="Holroyd S."/>
            <person name="Jagels K."/>
            <person name="Moule S."/>
            <person name="Mungall K."/>
            <person name="Quail M.A."/>
            <person name="Price C."/>
            <person name="Rabbinowitsch E."/>
            <person name="Sharp S."/>
            <person name="Skelton J."/>
            <person name="Whitehead S."/>
            <person name="Barrell B.G."/>
            <person name="Kehoe M."/>
            <person name="Parkhill J."/>
        </authorList>
    </citation>
    <scope>NUCLEOTIDE SEQUENCE [LARGE SCALE GENOMIC DNA]</scope>
    <source>
        <strain>Manfredo</strain>
    </source>
</reference>
<organism>
    <name type="scientific">Streptococcus pyogenes serotype M5 (strain Manfredo)</name>
    <dbReference type="NCBI Taxonomy" id="160491"/>
    <lineage>
        <taxon>Bacteria</taxon>
        <taxon>Bacillati</taxon>
        <taxon>Bacillota</taxon>
        <taxon>Bacilli</taxon>
        <taxon>Lactobacillales</taxon>
        <taxon>Streptococcaceae</taxon>
        <taxon>Streptococcus</taxon>
    </lineage>
</organism>
<proteinExistence type="inferred from homology"/>
<dbReference type="EC" id="1.3.98.1"/>
<dbReference type="EMBL" id="AM295007">
    <property type="protein sequence ID" value="CAM30028.1"/>
    <property type="molecule type" value="Genomic_DNA"/>
</dbReference>
<dbReference type="RefSeq" id="WP_011888785.1">
    <property type="nucleotide sequence ID" value="NC_009332.1"/>
</dbReference>
<dbReference type="SMR" id="A2RDV3"/>
<dbReference type="KEGG" id="spf:SpyM50695"/>
<dbReference type="HOGENOM" id="CLU_042042_3_0_9"/>
<dbReference type="UniPathway" id="UPA00070"/>
<dbReference type="GO" id="GO:0005737">
    <property type="term" value="C:cytoplasm"/>
    <property type="evidence" value="ECO:0007669"/>
    <property type="project" value="UniProtKB-SubCell"/>
</dbReference>
<dbReference type="GO" id="GO:1990663">
    <property type="term" value="F:dihydroorotate dehydrogenase (fumarate) activity"/>
    <property type="evidence" value="ECO:0007669"/>
    <property type="project" value="UniProtKB-EC"/>
</dbReference>
<dbReference type="GO" id="GO:0006207">
    <property type="term" value="P:'de novo' pyrimidine nucleobase biosynthetic process"/>
    <property type="evidence" value="ECO:0007669"/>
    <property type="project" value="InterPro"/>
</dbReference>
<dbReference type="GO" id="GO:0044205">
    <property type="term" value="P:'de novo' UMP biosynthetic process"/>
    <property type="evidence" value="ECO:0007669"/>
    <property type="project" value="UniProtKB-UniRule"/>
</dbReference>
<dbReference type="CDD" id="cd04741">
    <property type="entry name" value="DHOD_1A_like"/>
    <property type="match status" value="1"/>
</dbReference>
<dbReference type="FunFam" id="3.20.20.70:FF:000027">
    <property type="entry name" value="Dihydropyrimidine dehydrogenase [NADP(+)]"/>
    <property type="match status" value="1"/>
</dbReference>
<dbReference type="Gene3D" id="3.20.20.70">
    <property type="entry name" value="Aldolase class I"/>
    <property type="match status" value="1"/>
</dbReference>
<dbReference type="HAMAP" id="MF_00224">
    <property type="entry name" value="DHO_dh_type1"/>
    <property type="match status" value="1"/>
</dbReference>
<dbReference type="InterPro" id="IPR013785">
    <property type="entry name" value="Aldolase_TIM"/>
</dbReference>
<dbReference type="InterPro" id="IPR050074">
    <property type="entry name" value="DHO_dehydrogenase"/>
</dbReference>
<dbReference type="InterPro" id="IPR033886">
    <property type="entry name" value="DHOD_1A"/>
</dbReference>
<dbReference type="InterPro" id="IPR024920">
    <property type="entry name" value="Dihydroorotate_DH_1"/>
</dbReference>
<dbReference type="InterPro" id="IPR012135">
    <property type="entry name" value="Dihydroorotate_DH_1_2"/>
</dbReference>
<dbReference type="InterPro" id="IPR005720">
    <property type="entry name" value="Dihydroorotate_DH_cat"/>
</dbReference>
<dbReference type="InterPro" id="IPR001295">
    <property type="entry name" value="Dihydroorotate_DH_CS"/>
</dbReference>
<dbReference type="NCBIfam" id="NF002702">
    <property type="entry name" value="PRK02506.1"/>
    <property type="match status" value="1"/>
</dbReference>
<dbReference type="PANTHER" id="PTHR48109:SF1">
    <property type="entry name" value="DIHYDROOROTATE DEHYDROGENASE (FUMARATE)"/>
    <property type="match status" value="1"/>
</dbReference>
<dbReference type="PANTHER" id="PTHR48109">
    <property type="entry name" value="DIHYDROOROTATE DEHYDROGENASE (QUINONE), MITOCHONDRIAL-RELATED"/>
    <property type="match status" value="1"/>
</dbReference>
<dbReference type="Pfam" id="PF01180">
    <property type="entry name" value="DHO_dh"/>
    <property type="match status" value="1"/>
</dbReference>
<dbReference type="PIRSF" id="PIRSF000164">
    <property type="entry name" value="DHO_oxidase"/>
    <property type="match status" value="1"/>
</dbReference>
<dbReference type="SUPFAM" id="SSF51395">
    <property type="entry name" value="FMN-linked oxidoreductases"/>
    <property type="match status" value="1"/>
</dbReference>
<dbReference type="PROSITE" id="PS00912">
    <property type="entry name" value="DHODEHASE_2"/>
    <property type="match status" value="1"/>
</dbReference>
<gene>
    <name type="primary">pyrD</name>
    <name type="ordered locus">SpyM50695</name>
</gene>
<feature type="chain" id="PRO_1000100233" description="Putative dihydroorotate dehydrogenase A (fumarate)">
    <location>
        <begin position="1"/>
        <end position="311"/>
    </location>
</feature>
<feature type="active site" description="Nucleophile">
    <location>
        <position position="131"/>
    </location>
</feature>
<feature type="binding site" evidence="1">
    <location>
        <begin position="45"/>
        <end position="46"/>
    </location>
    <ligand>
        <name>FMN</name>
        <dbReference type="ChEBI" id="CHEBI:58210"/>
    </ligand>
</feature>
<feature type="binding site" evidence="1">
    <location>
        <position position="45"/>
    </location>
    <ligand>
        <name>substrate</name>
    </ligand>
</feature>
<feature type="binding site" evidence="1">
    <location>
        <begin position="69"/>
        <end position="73"/>
    </location>
    <ligand>
        <name>substrate</name>
    </ligand>
</feature>
<feature type="binding site" evidence="1">
    <location>
        <position position="128"/>
    </location>
    <ligand>
        <name>FMN</name>
        <dbReference type="ChEBI" id="CHEBI:58210"/>
    </ligand>
</feature>
<feature type="binding site" evidence="1">
    <location>
        <position position="128"/>
    </location>
    <ligand>
        <name>substrate</name>
    </ligand>
</feature>
<feature type="binding site" evidence="1">
    <location>
        <position position="165"/>
    </location>
    <ligand>
        <name>FMN</name>
        <dbReference type="ChEBI" id="CHEBI:58210"/>
    </ligand>
</feature>
<feature type="binding site" evidence="1">
    <location>
        <position position="193"/>
    </location>
    <ligand>
        <name>FMN</name>
        <dbReference type="ChEBI" id="CHEBI:58210"/>
    </ligand>
</feature>
<feature type="binding site" evidence="1">
    <location>
        <begin position="194"/>
        <end position="195"/>
    </location>
    <ligand>
        <name>substrate</name>
    </ligand>
</feature>
<feature type="binding site" evidence="1">
    <location>
        <position position="220"/>
    </location>
    <ligand>
        <name>FMN</name>
        <dbReference type="ChEBI" id="CHEBI:58210"/>
    </ligand>
</feature>
<feature type="binding site" evidence="1">
    <location>
        <begin position="248"/>
        <end position="249"/>
    </location>
    <ligand>
        <name>FMN</name>
        <dbReference type="ChEBI" id="CHEBI:58210"/>
    </ligand>
</feature>
<feature type="binding site" evidence="1">
    <location>
        <begin position="270"/>
        <end position="271"/>
    </location>
    <ligand>
        <name>FMN</name>
        <dbReference type="ChEBI" id="CHEBI:58210"/>
    </ligand>
</feature>
<evidence type="ECO:0000250" key="1"/>
<evidence type="ECO:0000305" key="2"/>